<organism>
    <name type="scientific">Homo sapiens</name>
    <name type="common">Human</name>
    <dbReference type="NCBI Taxonomy" id="9606"/>
    <lineage>
        <taxon>Eukaryota</taxon>
        <taxon>Metazoa</taxon>
        <taxon>Chordata</taxon>
        <taxon>Craniata</taxon>
        <taxon>Vertebrata</taxon>
        <taxon>Euteleostomi</taxon>
        <taxon>Mammalia</taxon>
        <taxon>Eutheria</taxon>
        <taxon>Euarchontoglires</taxon>
        <taxon>Primates</taxon>
        <taxon>Haplorrhini</taxon>
        <taxon>Catarrhini</taxon>
        <taxon>Hominidae</taxon>
        <taxon>Homo</taxon>
    </lineage>
</organism>
<accession>Q86W50</accession>
<accession>D3DTI8</accession>
<accession>Q86TE5</accession>
<accession>Q96T16</accession>
<accession>Q9BVG7</accession>
<reference key="1">
    <citation type="journal article" date="2004" name="Nat. Genet.">
        <title>Complete sequencing and characterization of 21,243 full-length human cDNAs.</title>
        <authorList>
            <person name="Ota T."/>
            <person name="Suzuki Y."/>
            <person name="Nishikawa T."/>
            <person name="Otsuki T."/>
            <person name="Sugiyama T."/>
            <person name="Irie R."/>
            <person name="Wakamatsu A."/>
            <person name="Hayashi K."/>
            <person name="Sato H."/>
            <person name="Nagai K."/>
            <person name="Kimura K."/>
            <person name="Makita H."/>
            <person name="Sekine M."/>
            <person name="Obayashi M."/>
            <person name="Nishi T."/>
            <person name="Shibahara T."/>
            <person name="Tanaka T."/>
            <person name="Ishii S."/>
            <person name="Yamamoto J."/>
            <person name="Saito K."/>
            <person name="Kawai Y."/>
            <person name="Isono Y."/>
            <person name="Nakamura Y."/>
            <person name="Nagahari K."/>
            <person name="Murakami K."/>
            <person name="Yasuda T."/>
            <person name="Iwayanagi T."/>
            <person name="Wagatsuma M."/>
            <person name="Shiratori A."/>
            <person name="Sudo H."/>
            <person name="Hosoiri T."/>
            <person name="Kaku Y."/>
            <person name="Kodaira H."/>
            <person name="Kondo H."/>
            <person name="Sugawara M."/>
            <person name="Takahashi M."/>
            <person name="Kanda K."/>
            <person name="Yokoi T."/>
            <person name="Furuya T."/>
            <person name="Kikkawa E."/>
            <person name="Omura Y."/>
            <person name="Abe K."/>
            <person name="Kamihara K."/>
            <person name="Katsuta N."/>
            <person name="Sato K."/>
            <person name="Tanikawa M."/>
            <person name="Yamazaki M."/>
            <person name="Ninomiya K."/>
            <person name="Ishibashi T."/>
            <person name="Yamashita H."/>
            <person name="Murakawa K."/>
            <person name="Fujimori K."/>
            <person name="Tanai H."/>
            <person name="Kimata M."/>
            <person name="Watanabe M."/>
            <person name="Hiraoka S."/>
            <person name="Chiba Y."/>
            <person name="Ishida S."/>
            <person name="Ono Y."/>
            <person name="Takiguchi S."/>
            <person name="Watanabe S."/>
            <person name="Yosida M."/>
            <person name="Hotuta T."/>
            <person name="Kusano J."/>
            <person name="Kanehori K."/>
            <person name="Takahashi-Fujii A."/>
            <person name="Hara H."/>
            <person name="Tanase T.-O."/>
            <person name="Nomura Y."/>
            <person name="Togiya S."/>
            <person name="Komai F."/>
            <person name="Hara R."/>
            <person name="Takeuchi K."/>
            <person name="Arita M."/>
            <person name="Imose N."/>
            <person name="Musashino K."/>
            <person name="Yuuki H."/>
            <person name="Oshima A."/>
            <person name="Sasaki N."/>
            <person name="Aotsuka S."/>
            <person name="Yoshikawa Y."/>
            <person name="Matsunawa H."/>
            <person name="Ichihara T."/>
            <person name="Shiohata N."/>
            <person name="Sano S."/>
            <person name="Moriya S."/>
            <person name="Momiyama H."/>
            <person name="Satoh N."/>
            <person name="Takami S."/>
            <person name="Terashima Y."/>
            <person name="Suzuki O."/>
            <person name="Nakagawa S."/>
            <person name="Senoh A."/>
            <person name="Mizoguchi H."/>
            <person name="Goto Y."/>
            <person name="Shimizu F."/>
            <person name="Wakebe H."/>
            <person name="Hishigaki H."/>
            <person name="Watanabe T."/>
            <person name="Sugiyama A."/>
            <person name="Takemoto M."/>
            <person name="Kawakami B."/>
            <person name="Yamazaki M."/>
            <person name="Watanabe K."/>
            <person name="Kumagai A."/>
            <person name="Itakura S."/>
            <person name="Fukuzumi Y."/>
            <person name="Fujimori Y."/>
            <person name="Komiyama M."/>
            <person name="Tashiro H."/>
            <person name="Tanigami A."/>
            <person name="Fujiwara T."/>
            <person name="Ono T."/>
            <person name="Yamada K."/>
            <person name="Fujii Y."/>
            <person name="Ozaki K."/>
            <person name="Hirao M."/>
            <person name="Ohmori Y."/>
            <person name="Kawabata A."/>
            <person name="Hikiji T."/>
            <person name="Kobatake N."/>
            <person name="Inagaki H."/>
            <person name="Ikema Y."/>
            <person name="Okamoto S."/>
            <person name="Okitani R."/>
            <person name="Kawakami T."/>
            <person name="Noguchi S."/>
            <person name="Itoh T."/>
            <person name="Shigeta K."/>
            <person name="Senba T."/>
            <person name="Matsumura K."/>
            <person name="Nakajima Y."/>
            <person name="Mizuno T."/>
            <person name="Morinaga M."/>
            <person name="Sasaki M."/>
            <person name="Togashi T."/>
            <person name="Oyama M."/>
            <person name="Hata H."/>
            <person name="Watanabe M."/>
            <person name="Komatsu T."/>
            <person name="Mizushima-Sugano J."/>
            <person name="Satoh T."/>
            <person name="Shirai Y."/>
            <person name="Takahashi Y."/>
            <person name="Nakagawa K."/>
            <person name="Okumura K."/>
            <person name="Nagase T."/>
            <person name="Nomura N."/>
            <person name="Kikuchi H."/>
            <person name="Masuho Y."/>
            <person name="Yamashita R."/>
            <person name="Nakai K."/>
            <person name="Yada T."/>
            <person name="Nakamura Y."/>
            <person name="Ohara O."/>
            <person name="Isogai T."/>
            <person name="Sugano S."/>
        </authorList>
    </citation>
    <scope>NUCLEOTIDE SEQUENCE [LARGE SCALE MRNA] (ISOFORM 1)</scope>
</reference>
<reference key="2">
    <citation type="journal article" date="2007" name="BMC Genomics">
        <title>The full-ORF clone resource of the German cDNA consortium.</title>
        <authorList>
            <person name="Bechtel S."/>
            <person name="Rosenfelder H."/>
            <person name="Duda A."/>
            <person name="Schmidt C.P."/>
            <person name="Ernst U."/>
            <person name="Wellenreuther R."/>
            <person name="Mehrle A."/>
            <person name="Schuster C."/>
            <person name="Bahr A."/>
            <person name="Bloecker H."/>
            <person name="Heubner D."/>
            <person name="Hoerlein A."/>
            <person name="Michel G."/>
            <person name="Wedler H."/>
            <person name="Koehrer K."/>
            <person name="Ottenwaelder B."/>
            <person name="Poustka A."/>
            <person name="Wiemann S."/>
            <person name="Schupp I."/>
        </authorList>
    </citation>
    <scope>NUCLEOTIDE SEQUENCE [LARGE SCALE MRNA] (ISOFORM 1)</scope>
    <source>
        <tissue>Spinal cord</tissue>
    </source>
</reference>
<reference key="3">
    <citation type="journal article" date="2006" name="Nature">
        <title>DNA sequence of human chromosome 17 and analysis of rearrangement in the human lineage.</title>
        <authorList>
            <person name="Zody M.C."/>
            <person name="Garber M."/>
            <person name="Adams D.J."/>
            <person name="Sharpe T."/>
            <person name="Harrow J."/>
            <person name="Lupski J.R."/>
            <person name="Nicholson C."/>
            <person name="Searle S.M."/>
            <person name="Wilming L."/>
            <person name="Young S.K."/>
            <person name="Abouelleil A."/>
            <person name="Allen N.R."/>
            <person name="Bi W."/>
            <person name="Bloom T."/>
            <person name="Borowsky M.L."/>
            <person name="Bugalter B.E."/>
            <person name="Butler J."/>
            <person name="Chang J.L."/>
            <person name="Chen C.-K."/>
            <person name="Cook A."/>
            <person name="Corum B."/>
            <person name="Cuomo C.A."/>
            <person name="de Jong P.J."/>
            <person name="DeCaprio D."/>
            <person name="Dewar K."/>
            <person name="FitzGerald M."/>
            <person name="Gilbert J."/>
            <person name="Gibson R."/>
            <person name="Gnerre S."/>
            <person name="Goldstein S."/>
            <person name="Grafham D.V."/>
            <person name="Grocock R."/>
            <person name="Hafez N."/>
            <person name="Hagopian D.S."/>
            <person name="Hart E."/>
            <person name="Norman C.H."/>
            <person name="Humphray S."/>
            <person name="Jaffe D.B."/>
            <person name="Jones M."/>
            <person name="Kamal M."/>
            <person name="Khodiyar V.K."/>
            <person name="LaButti K."/>
            <person name="Laird G."/>
            <person name="Lehoczky J."/>
            <person name="Liu X."/>
            <person name="Lokyitsang T."/>
            <person name="Loveland J."/>
            <person name="Lui A."/>
            <person name="Macdonald P."/>
            <person name="Major J.E."/>
            <person name="Matthews L."/>
            <person name="Mauceli E."/>
            <person name="McCarroll S.A."/>
            <person name="Mihalev A.H."/>
            <person name="Mudge J."/>
            <person name="Nguyen C."/>
            <person name="Nicol R."/>
            <person name="O'Leary S.B."/>
            <person name="Osoegawa K."/>
            <person name="Schwartz D.C."/>
            <person name="Shaw-Smith C."/>
            <person name="Stankiewicz P."/>
            <person name="Steward C."/>
            <person name="Swarbreck D."/>
            <person name="Venkataraman V."/>
            <person name="Whittaker C.A."/>
            <person name="Yang X."/>
            <person name="Zimmer A.R."/>
            <person name="Bradley A."/>
            <person name="Hubbard T."/>
            <person name="Birren B.W."/>
            <person name="Rogers J."/>
            <person name="Lander E.S."/>
            <person name="Nusbaum C."/>
        </authorList>
    </citation>
    <scope>NUCLEOTIDE SEQUENCE [LARGE SCALE GENOMIC DNA]</scope>
</reference>
<reference key="4">
    <citation type="submission" date="2005-09" db="EMBL/GenBank/DDBJ databases">
        <authorList>
            <person name="Mural R.J."/>
            <person name="Istrail S."/>
            <person name="Sutton G.G."/>
            <person name="Florea L."/>
            <person name="Halpern A.L."/>
            <person name="Mobarry C.M."/>
            <person name="Lippert R."/>
            <person name="Walenz B."/>
            <person name="Shatkay H."/>
            <person name="Dew I."/>
            <person name="Miller J.R."/>
            <person name="Flanigan M.J."/>
            <person name="Edwards N.J."/>
            <person name="Bolanos R."/>
            <person name="Fasulo D."/>
            <person name="Halldorsson B.V."/>
            <person name="Hannenhalli S."/>
            <person name="Turner R."/>
            <person name="Yooseph S."/>
            <person name="Lu F."/>
            <person name="Nusskern D.R."/>
            <person name="Shue B.C."/>
            <person name="Zheng X.H."/>
            <person name="Zhong F."/>
            <person name="Delcher A.L."/>
            <person name="Huson D.H."/>
            <person name="Kravitz S.A."/>
            <person name="Mouchard L."/>
            <person name="Reinert K."/>
            <person name="Remington K.A."/>
            <person name="Clark A.G."/>
            <person name="Waterman M.S."/>
            <person name="Eichler E.E."/>
            <person name="Adams M.D."/>
            <person name="Hunkapiller M.W."/>
            <person name="Myers E.W."/>
            <person name="Venter J.C."/>
        </authorList>
    </citation>
    <scope>NUCLEOTIDE SEQUENCE [LARGE SCALE GENOMIC DNA]</scope>
</reference>
<reference key="5">
    <citation type="journal article" date="2004" name="Genome Res.">
        <title>The status, quality, and expansion of the NIH full-length cDNA project: the Mammalian Gene Collection (MGC).</title>
        <authorList>
            <consortium name="The MGC Project Team"/>
        </authorList>
    </citation>
    <scope>NUCLEOTIDE SEQUENCE [LARGE SCALE MRNA] (ISOFORMS 1 AND 2)</scope>
    <scope>VARIANT ASN-479</scope>
    <source>
        <tissue>Muscle</tissue>
        <tissue>Uterus</tissue>
    </source>
</reference>
<reference key="6">
    <citation type="journal article" date="2008" name="Mol. Cell">
        <title>Kinase-selective enrichment enables quantitative phosphoproteomics of the kinome across the cell cycle.</title>
        <authorList>
            <person name="Daub H."/>
            <person name="Olsen J.V."/>
            <person name="Bairlein M."/>
            <person name="Gnad F."/>
            <person name="Oppermann F.S."/>
            <person name="Korner R."/>
            <person name="Greff Z."/>
            <person name="Keri G."/>
            <person name="Stemmann O."/>
            <person name="Mann M."/>
        </authorList>
    </citation>
    <scope>PHOSPHORYLATION [LARGE SCALE ANALYSIS] AT SER-329</scope>
    <scope>IDENTIFICATION BY MASS SPECTROMETRY [LARGE SCALE ANALYSIS]</scope>
    <source>
        <tissue>Cervix carcinoma</tissue>
    </source>
</reference>
<reference key="7">
    <citation type="journal article" date="2008" name="Proc. Natl. Acad. Sci. U.S.A.">
        <title>A quantitative atlas of mitotic phosphorylation.</title>
        <authorList>
            <person name="Dephoure N."/>
            <person name="Zhou C."/>
            <person name="Villen J."/>
            <person name="Beausoleil S.A."/>
            <person name="Bakalarski C.E."/>
            <person name="Elledge S.J."/>
            <person name="Gygi S.P."/>
        </authorList>
    </citation>
    <scope>PHOSPHORYLATION [LARGE SCALE ANALYSIS] AT SER-329</scope>
    <scope>IDENTIFICATION BY MASS SPECTROMETRY [LARGE SCALE ANALYSIS]</scope>
    <source>
        <tissue>Cervix carcinoma</tissue>
    </source>
</reference>
<reference key="8">
    <citation type="journal article" date="2011" name="BMC Syst. Biol.">
        <title>Initial characterization of the human central proteome.</title>
        <authorList>
            <person name="Burkard T.R."/>
            <person name="Planyavsky M."/>
            <person name="Kaupe I."/>
            <person name="Breitwieser F.P."/>
            <person name="Buerckstuemmer T."/>
            <person name="Bennett K.L."/>
            <person name="Superti-Furga G."/>
            <person name="Colinge J."/>
        </authorList>
    </citation>
    <scope>IDENTIFICATION BY MASS SPECTROMETRY [LARGE SCALE ANALYSIS]</scope>
</reference>
<reference key="9">
    <citation type="journal article" date="2013" name="J. Proteome Res.">
        <title>Toward a comprehensive characterization of a human cancer cell phosphoproteome.</title>
        <authorList>
            <person name="Zhou H."/>
            <person name="Di Palma S."/>
            <person name="Preisinger C."/>
            <person name="Peng M."/>
            <person name="Polat A.N."/>
            <person name="Heck A.J."/>
            <person name="Mohammed S."/>
        </authorList>
    </citation>
    <scope>PHOSPHORYLATION [LARGE SCALE ANALYSIS] AT SER-329</scope>
    <scope>IDENTIFICATION BY MASS SPECTROMETRY [LARGE SCALE ANALYSIS]</scope>
    <source>
        <tissue>Cervix carcinoma</tissue>
        <tissue>Erythroleukemia</tissue>
    </source>
</reference>
<reference key="10">
    <citation type="journal article" date="2016" name="Proc. Natl. Acad. Sci. U.S.A.">
        <title>Methyltransferase-like protein 16 binds the 3'-terminal triple helix of MALAT1 long noncoding RNA.</title>
        <authorList>
            <person name="Brown J.A."/>
            <person name="Kinzig C.G."/>
            <person name="DeGregorio S.J."/>
            <person name="Steitz J.A."/>
        </authorList>
    </citation>
    <scope>FUNCTION</scope>
    <scope>RNA-BINDING</scope>
    <scope>SUBCELLULAR LOCATION</scope>
</reference>
<reference key="11">
    <citation type="journal article" date="2017" name="Cell">
        <title>The U6 snRNA m(6)A methyltransferase METTL16 regulates SAM synthetase intron retention.</title>
        <authorList>
            <person name="Pendleton K.E."/>
            <person name="Chen B."/>
            <person name="Liu K."/>
            <person name="Hunter O.V."/>
            <person name="Xie Y."/>
            <person name="Tu B.P."/>
            <person name="Conrad N.K."/>
        </authorList>
    </citation>
    <scope>FUNCTION</scope>
    <scope>CATALYTIC ACTIVITY</scope>
    <scope>DOMAIN</scope>
    <scope>MUTAGENESIS OF 185-PRO-PRO-186 AND PHE-187</scope>
</reference>
<reference key="12">
    <citation type="journal article" date="2017" name="EMBO Rep.">
        <title>Human METTL16 is a N6-methyladenosine (m6A) methyltransferase that targets pre-mRNAs and various non-coding RNAs.</title>
        <authorList>
            <person name="Warda A.S."/>
            <person name="Kretschmer J."/>
            <person name="Hackert P."/>
            <person name="Lenz C."/>
            <person name="Urlaub H."/>
            <person name="Hoebartner C."/>
            <person name="Sloan K.E."/>
            <person name="Bohnsack M.T."/>
        </authorList>
    </citation>
    <scope>FUNCTION</scope>
    <scope>CATALYTIC ACTIVITY</scope>
    <scope>INTERACTION WITH LARP7 AND MEPCE</scope>
</reference>
<reference key="13">
    <citation type="journal article" date="2020" name="PLoS ONE">
        <title>Characterization of METTL16 as a cytoplasmic RNA binding protein.</title>
        <authorList>
            <person name="Nance D.J."/>
            <person name="Satterwhite E.R."/>
            <person name="Bhaskar B."/>
            <person name="Misra S."/>
            <person name="Carraway K.R."/>
            <person name="Mansfield K.D."/>
        </authorList>
    </citation>
    <scope>SUBCELLULAR LOCATION</scope>
</reference>
<reference key="14">
    <citation type="journal article" date="2021" name="Cell">
        <title>Splice site m6A methylation prevents binding of U2AF35 to inhibit RNA splicing.</title>
        <authorList>
            <person name="Mendel M."/>
            <person name="Delaney K."/>
            <person name="Pandey R.R."/>
            <person name="Chen K.M."/>
            <person name="Wenda J.M."/>
            <person name="Vaagboe C.B."/>
            <person name="Steiner F.A."/>
            <person name="Homolka D."/>
            <person name="Pillai R.S."/>
        </authorList>
    </citation>
    <scope>FUNCTION</scope>
</reference>
<reference key="15">
    <citation type="journal article" date="2021" name="J. Biol. Chem.">
        <title>Enzymatic characterization of three human RNA adenosine methyltransferases reveals diverse substrate affinities and reaction optima.</title>
        <authorList>
            <person name="Yu D."/>
            <person name="Kaur G."/>
            <person name="Blumenthal R.M."/>
            <person name="Zhang X."/>
            <person name="Cheng X."/>
        </authorList>
    </citation>
    <scope>FUNCTION</scope>
    <scope>CATALYTIC ACTIVITY</scope>
    <scope>ACTIVITY REGULATION</scope>
</reference>
<reference key="16">
    <citation type="submission" date="2006-06" db="PDB data bank">
        <title>The crystal structure of human methyltransferase 10 domain-containing protein.</title>
        <authorList>
            <consortium name="Structural genomics consortium (SGC)"/>
        </authorList>
    </citation>
    <scope>X-RAY CRYSTALLOGRAPHY (2.0 ANGSTROMS) OF 39-291 IN COMPLEX WITH S-ADENOSYL-L-HOMOCYSTEINE</scope>
</reference>
<reference evidence="25 26 27" key="17">
    <citation type="journal article" date="2018" name="Mol. Cell">
        <title>Methylation of structured RNA by the m6A writer METTL16 is essential for mouse embryonic development.</title>
        <authorList>
            <person name="Mendel M."/>
            <person name="Chen K.M."/>
            <person name="Homolka D."/>
            <person name="Gos P."/>
            <person name="Pandey R.R."/>
            <person name="McCarthy A.A."/>
            <person name="Pillai R.S."/>
        </authorList>
    </citation>
    <scope>X-RAY CRYSTALLOGRAPHY (2.30 ANGSTROMS) OF 41-291 IN COMPLEX WITH S-ADENOSYL-L-HOMOCYSTEINE</scope>
    <scope>FUNCTION</scope>
    <scope>CATALYTIC ACTIVITY</scope>
    <scope>MUTAGENESIS OF 5-LYS--LYS-16; LYS-5; ARG-10; ARG-12; LYS-14; LYS-16; LYS-26; LYS-31; LYS-47; ARG-82; 185-PRO-PRO-186; PHE-187; 200-ARG--ARG-204; 202-PRO-PRO-207; ARG-279 AND ARG-282</scope>
</reference>
<reference evidence="23 24" key="18">
    <citation type="journal article" date="2018" name="Mol. Cell">
        <title>Structural basis for regulation of METTL16, an S-adenosylmethionine homeostasis factor.</title>
        <authorList>
            <person name="Doxtader K.A."/>
            <person name="Wang P."/>
            <person name="Scarborough A.M."/>
            <person name="Seo D."/>
            <person name="Conrad N.K."/>
            <person name="Nam Y."/>
        </authorList>
    </citation>
    <scope>X-RAY CRYSTALLOGRAPHY (1.70 ANGSTROMS) OF 1-310 IN COMPLEX WITH RNA</scope>
    <scope>FUNCTION</scope>
    <scope>CATALYTIC ACTIVITY</scope>
    <scope>ACTIVITY REGULATION</scope>
    <scope>MUTAGENESIS OF ASN-39; ARG-82; GLU-133; LYS-163; MET-167 AND ASN-184</scope>
    <scope>VARIANT CYS-110</scope>
    <scope>CHARACTERIZATION OF VARIANT CYS-110</scope>
</reference>
<reference evidence="21 22" key="19">
    <citation type="journal article" date="2018" name="Sci. Rep.">
        <title>Structural insights into the RNA methyltransferase domain of METTL16.</title>
        <authorList>
            <person name="Ruszkowska A."/>
            <person name="Ruszkowski M."/>
            <person name="Dauter Z."/>
            <person name="Brown J.A."/>
        </authorList>
    </citation>
    <scope>X-RAY CRYSTALLOGRAPHY (1.94 ANGSTROMS) OF 1-291 IN COMPLEX WITH S-ADENOSYL-L-HOMOCYSTEINE</scope>
</reference>
<reference evidence="28" key="20">
    <citation type="journal article" date="2020" name="Nucleic Acids Res.">
        <title>Mechanistic insights into m6A modification of U6 snRNA by human METTL16.</title>
        <authorList>
            <person name="Aoyama T."/>
            <person name="Yamashita S."/>
            <person name="Tomita K."/>
        </authorList>
    </citation>
    <scope>X-RAY CRYSTALLOGRAPHY (2.79 ANGSTROMS) OF 310-562</scope>
    <scope>FUNCTION</scope>
    <scope>CATALYTIC ACTIVITY</scope>
    <scope>DOMAIN</scope>
</reference>
<evidence type="ECO:0000250" key="1">
    <source>
        <dbReference type="UniProtKB" id="Q9CQG2"/>
    </source>
</evidence>
<evidence type="ECO:0000256" key="2">
    <source>
        <dbReference type="SAM" id="MobiDB-lite"/>
    </source>
</evidence>
<evidence type="ECO:0000269" key="3">
    <source>
    </source>
</evidence>
<evidence type="ECO:0000269" key="4">
    <source>
    </source>
</evidence>
<evidence type="ECO:0000269" key="5">
    <source>
    </source>
</evidence>
<evidence type="ECO:0000269" key="6">
    <source>
    </source>
</evidence>
<evidence type="ECO:0000269" key="7">
    <source>
    </source>
</evidence>
<evidence type="ECO:0000269" key="8">
    <source>
    </source>
</evidence>
<evidence type="ECO:0000269" key="9">
    <source>
    </source>
</evidence>
<evidence type="ECO:0000269" key="10">
    <source>
    </source>
</evidence>
<evidence type="ECO:0000269" key="11">
    <source>
    </source>
</evidence>
<evidence type="ECO:0000269" key="12">
    <source>
    </source>
</evidence>
<evidence type="ECO:0000269" key="13">
    <source>
    </source>
</evidence>
<evidence type="ECO:0000269" key="14">
    <source ref="16"/>
</evidence>
<evidence type="ECO:0000303" key="15">
    <source>
    </source>
</evidence>
<evidence type="ECO:0000303" key="16">
    <source>
    </source>
</evidence>
<evidence type="ECO:0000303" key="17">
    <source ref="16"/>
</evidence>
<evidence type="ECO:0000305" key="18"/>
<evidence type="ECO:0000312" key="19">
    <source>
        <dbReference type="HGNC" id="HGNC:28484"/>
    </source>
</evidence>
<evidence type="ECO:0007744" key="20">
    <source>
        <dbReference type="PDB" id="2H00"/>
    </source>
</evidence>
<evidence type="ECO:0007744" key="21">
    <source>
        <dbReference type="PDB" id="6B91"/>
    </source>
</evidence>
<evidence type="ECO:0007744" key="22">
    <source>
        <dbReference type="PDB" id="6B92"/>
    </source>
</evidence>
<evidence type="ECO:0007744" key="23">
    <source>
        <dbReference type="PDB" id="6DU4"/>
    </source>
</evidence>
<evidence type="ECO:0007744" key="24">
    <source>
        <dbReference type="PDB" id="6DU5"/>
    </source>
</evidence>
<evidence type="ECO:0007744" key="25">
    <source>
        <dbReference type="PDB" id="6GFK"/>
    </source>
</evidence>
<evidence type="ECO:0007744" key="26">
    <source>
        <dbReference type="PDB" id="6GFN"/>
    </source>
</evidence>
<evidence type="ECO:0007744" key="27">
    <source>
        <dbReference type="PDB" id="6GT5"/>
    </source>
</evidence>
<evidence type="ECO:0007744" key="28">
    <source>
        <dbReference type="PDB" id="6M1U"/>
    </source>
</evidence>
<evidence type="ECO:0007744" key="29">
    <source>
    </source>
</evidence>
<evidence type="ECO:0007744" key="30">
    <source>
    </source>
</evidence>
<evidence type="ECO:0007744" key="31">
    <source>
    </source>
</evidence>
<evidence type="ECO:0007829" key="32">
    <source>
        <dbReference type="PDB" id="2H00"/>
    </source>
</evidence>
<evidence type="ECO:0007829" key="33">
    <source>
        <dbReference type="PDB" id="6B91"/>
    </source>
</evidence>
<evidence type="ECO:0007829" key="34">
    <source>
        <dbReference type="PDB" id="6DU4"/>
    </source>
</evidence>
<evidence type="ECO:0007829" key="35">
    <source>
        <dbReference type="PDB" id="6DU5"/>
    </source>
</evidence>
<evidence type="ECO:0007829" key="36">
    <source>
        <dbReference type="PDB" id="6GT5"/>
    </source>
</evidence>
<evidence type="ECO:0007829" key="37">
    <source>
        <dbReference type="PDB" id="6M1U"/>
    </source>
</evidence>
<gene>
    <name evidence="16 19" type="primary">METTL16</name>
    <name evidence="17 19" type="synonym">METT10D</name>
</gene>
<dbReference type="EC" id="2.1.1.348" evidence="5 8 9 12"/>
<dbReference type="EC" id="2.1.1.346" evidence="5 6 11"/>
<dbReference type="EMBL" id="AK027410">
    <property type="protein sequence ID" value="BAB55094.1"/>
    <property type="status" value="ALT_SEQ"/>
    <property type="molecule type" value="mRNA"/>
</dbReference>
<dbReference type="EMBL" id="AL832612">
    <property type="protein sequence ID" value="CAD89999.2"/>
    <property type="status" value="ALT_FRAME"/>
    <property type="molecule type" value="mRNA"/>
</dbReference>
<dbReference type="EMBL" id="AC006435">
    <property type="status" value="NOT_ANNOTATED_CDS"/>
    <property type="molecule type" value="Genomic_DNA"/>
</dbReference>
<dbReference type="EMBL" id="AC015799">
    <property type="status" value="NOT_ANNOTATED_CDS"/>
    <property type="molecule type" value="Genomic_DNA"/>
</dbReference>
<dbReference type="EMBL" id="CH471108">
    <property type="protein sequence ID" value="EAW90537.1"/>
    <property type="molecule type" value="Genomic_DNA"/>
</dbReference>
<dbReference type="EMBL" id="CH471108">
    <property type="protein sequence ID" value="EAW90538.1"/>
    <property type="molecule type" value="Genomic_DNA"/>
</dbReference>
<dbReference type="EMBL" id="BC001213">
    <property type="protein sequence ID" value="AAH01213.1"/>
    <property type="molecule type" value="mRNA"/>
</dbReference>
<dbReference type="EMBL" id="BC050603">
    <property type="protein sequence ID" value="AAH50603.1"/>
    <property type="molecule type" value="mRNA"/>
</dbReference>
<dbReference type="CCDS" id="CCDS42232.1">
    <molecule id="Q86W50-1"/>
</dbReference>
<dbReference type="RefSeq" id="NP_076991.3">
    <molecule id="Q86W50-1"/>
    <property type="nucleotide sequence ID" value="NM_024086.3"/>
</dbReference>
<dbReference type="PDB" id="2H00">
    <property type="method" value="X-ray"/>
    <property type="resolution" value="2.00 A"/>
    <property type="chains" value="A/B/C=40-291"/>
</dbReference>
<dbReference type="PDB" id="6B91">
    <property type="method" value="X-ray"/>
    <property type="resolution" value="1.94 A"/>
    <property type="chains" value="A=1-291"/>
</dbReference>
<dbReference type="PDB" id="6B92">
    <property type="method" value="X-ray"/>
    <property type="resolution" value="2.10 A"/>
    <property type="chains" value="A=1-291"/>
</dbReference>
<dbReference type="PDB" id="6DU4">
    <property type="method" value="X-ray"/>
    <property type="resolution" value="1.70 A"/>
    <property type="chains" value="A=1-310"/>
</dbReference>
<dbReference type="PDB" id="6DU5">
    <property type="method" value="X-ray"/>
    <property type="resolution" value="3.01 A"/>
    <property type="chains" value="A=2-310"/>
</dbReference>
<dbReference type="PDB" id="6GFK">
    <property type="method" value="X-ray"/>
    <property type="resolution" value="2.30 A"/>
    <property type="chains" value="A/B/C=41-291"/>
</dbReference>
<dbReference type="PDB" id="6GFN">
    <property type="method" value="X-ray"/>
    <property type="resolution" value="2.86 A"/>
    <property type="chains" value="A=1-291"/>
</dbReference>
<dbReference type="PDB" id="6GT5">
    <property type="method" value="X-ray"/>
    <property type="resolution" value="2.45 A"/>
    <property type="chains" value="A/B=1-291"/>
</dbReference>
<dbReference type="PDB" id="6M1U">
    <property type="method" value="X-ray"/>
    <property type="resolution" value="2.79 A"/>
    <property type="chains" value="A=310-562"/>
</dbReference>
<dbReference type="PDBsum" id="2H00"/>
<dbReference type="PDBsum" id="6B91"/>
<dbReference type="PDBsum" id="6B92"/>
<dbReference type="PDBsum" id="6DU4"/>
<dbReference type="PDBsum" id="6DU5"/>
<dbReference type="PDBsum" id="6GFK"/>
<dbReference type="PDBsum" id="6GFN"/>
<dbReference type="PDBsum" id="6GT5"/>
<dbReference type="PDBsum" id="6M1U"/>
<dbReference type="SMR" id="Q86W50"/>
<dbReference type="BioGRID" id="122519">
    <property type="interactions" value="47"/>
</dbReference>
<dbReference type="FunCoup" id="Q86W50">
    <property type="interactions" value="4326"/>
</dbReference>
<dbReference type="IntAct" id="Q86W50">
    <property type="interactions" value="11"/>
</dbReference>
<dbReference type="STRING" id="9606.ENSP00000263092"/>
<dbReference type="ChEMBL" id="CHEMBL5465326"/>
<dbReference type="GlyGen" id="Q86W50">
    <property type="glycosylation" value="1 site, 1 O-linked glycan (1 site)"/>
</dbReference>
<dbReference type="iPTMnet" id="Q86W50"/>
<dbReference type="PhosphoSitePlus" id="Q86W50"/>
<dbReference type="BioMuta" id="METTL16"/>
<dbReference type="DMDM" id="269849619"/>
<dbReference type="jPOST" id="Q86W50"/>
<dbReference type="MassIVE" id="Q86W50"/>
<dbReference type="PaxDb" id="9606-ENSP00000263092"/>
<dbReference type="PeptideAtlas" id="Q86W50"/>
<dbReference type="ProteomicsDB" id="70116">
    <molecule id="Q86W50-1"/>
</dbReference>
<dbReference type="ProteomicsDB" id="70117">
    <molecule id="Q86W50-2"/>
</dbReference>
<dbReference type="Pumba" id="Q86W50"/>
<dbReference type="Antibodypedia" id="5377">
    <property type="antibodies" value="272 antibodies from 26 providers"/>
</dbReference>
<dbReference type="DNASU" id="79066"/>
<dbReference type="Ensembl" id="ENST00000263092.11">
    <molecule id="Q86W50-1"/>
    <property type="protein sequence ID" value="ENSP00000263092.5"/>
    <property type="gene ID" value="ENSG00000127804.13"/>
</dbReference>
<dbReference type="GeneID" id="79066"/>
<dbReference type="KEGG" id="hsa:79066"/>
<dbReference type="MANE-Select" id="ENST00000263092.11">
    <property type="protein sequence ID" value="ENSP00000263092.5"/>
    <property type="RefSeq nucleotide sequence ID" value="NM_024086.4"/>
    <property type="RefSeq protein sequence ID" value="NP_076991.3"/>
</dbReference>
<dbReference type="UCSC" id="uc002fut.4">
    <molecule id="Q86W50-1"/>
    <property type="organism name" value="human"/>
</dbReference>
<dbReference type="AGR" id="HGNC:28484"/>
<dbReference type="CTD" id="79066"/>
<dbReference type="DisGeNET" id="79066"/>
<dbReference type="GeneCards" id="METTL16"/>
<dbReference type="HGNC" id="HGNC:28484">
    <property type="gene designation" value="METTL16"/>
</dbReference>
<dbReference type="HPA" id="ENSG00000127804">
    <property type="expression patterns" value="Low tissue specificity"/>
</dbReference>
<dbReference type="neXtProt" id="NX_Q86W50"/>
<dbReference type="OpenTargets" id="ENSG00000127804"/>
<dbReference type="PharmGKB" id="PA142671460"/>
<dbReference type="VEuPathDB" id="HostDB:ENSG00000127804"/>
<dbReference type="eggNOG" id="KOG2912">
    <property type="taxonomic scope" value="Eukaryota"/>
</dbReference>
<dbReference type="GeneTree" id="ENSGT00390000016694"/>
<dbReference type="HOGENOM" id="CLU_027534_0_0_1"/>
<dbReference type="InParanoid" id="Q86W50"/>
<dbReference type="OMA" id="TEFCQGH"/>
<dbReference type="OrthoDB" id="514248at2759"/>
<dbReference type="PAN-GO" id="Q86W50">
    <property type="GO annotations" value="3 GO annotations based on evolutionary models"/>
</dbReference>
<dbReference type="PhylomeDB" id="Q86W50"/>
<dbReference type="TreeFam" id="TF313132"/>
<dbReference type="BRENDA" id="2.1.1.346">
    <property type="organism ID" value="2681"/>
</dbReference>
<dbReference type="PathwayCommons" id="Q86W50"/>
<dbReference type="SignaLink" id="Q86W50"/>
<dbReference type="BioGRID-ORCS" id="79066">
    <property type="hits" value="716 hits in 1123 CRISPR screens"/>
</dbReference>
<dbReference type="ChiTaRS" id="METTL16">
    <property type="organism name" value="human"/>
</dbReference>
<dbReference type="EvolutionaryTrace" id="Q86W50"/>
<dbReference type="GenomeRNAi" id="79066"/>
<dbReference type="Pharos" id="Q86W50">
    <property type="development level" value="Tbio"/>
</dbReference>
<dbReference type="PRO" id="PR:Q86W50"/>
<dbReference type="Proteomes" id="UP000005640">
    <property type="component" value="Chromosome 17"/>
</dbReference>
<dbReference type="RNAct" id="Q86W50">
    <property type="molecule type" value="protein"/>
</dbReference>
<dbReference type="Bgee" id="ENSG00000127804">
    <property type="expression patterns" value="Expressed in calcaneal tendon and 185 other cell types or tissues"/>
</dbReference>
<dbReference type="ExpressionAtlas" id="Q86W50">
    <property type="expression patterns" value="baseline and differential"/>
</dbReference>
<dbReference type="GO" id="GO:0005737">
    <property type="term" value="C:cytoplasm"/>
    <property type="evidence" value="ECO:0000314"/>
    <property type="project" value="UniProtKB"/>
</dbReference>
<dbReference type="GO" id="GO:0005634">
    <property type="term" value="C:nucleus"/>
    <property type="evidence" value="ECO:0000314"/>
    <property type="project" value="UniProtKB"/>
</dbReference>
<dbReference type="GO" id="GO:0001734">
    <property type="term" value="F:mRNA m(6)A methyltransferase activity"/>
    <property type="evidence" value="ECO:0000314"/>
    <property type="project" value="UniProtKB"/>
</dbReference>
<dbReference type="GO" id="GO:0003723">
    <property type="term" value="F:RNA binding"/>
    <property type="evidence" value="ECO:0000314"/>
    <property type="project" value="UniProtKB"/>
</dbReference>
<dbReference type="GO" id="GO:0035613">
    <property type="term" value="F:RNA stem-loop binding"/>
    <property type="evidence" value="ECO:0000314"/>
    <property type="project" value="UniProtKB"/>
</dbReference>
<dbReference type="GO" id="GO:0120048">
    <property type="term" value="F:U6 snRNA (adenine-(43)-N(6))-methyltransferase activity"/>
    <property type="evidence" value="ECO:0000314"/>
    <property type="project" value="UniProtKB"/>
</dbReference>
<dbReference type="GO" id="GO:0030629">
    <property type="term" value="F:U6 snRNA 3'-end binding"/>
    <property type="evidence" value="ECO:0000314"/>
    <property type="project" value="UniProtKB"/>
</dbReference>
<dbReference type="GO" id="GO:0006402">
    <property type="term" value="P:mRNA catabolic process"/>
    <property type="evidence" value="ECO:0000250"/>
    <property type="project" value="UniProtKB"/>
</dbReference>
<dbReference type="GO" id="GO:0061157">
    <property type="term" value="P:mRNA destabilization"/>
    <property type="evidence" value="ECO:0000250"/>
    <property type="project" value="UniProtKB"/>
</dbReference>
<dbReference type="GO" id="GO:0006397">
    <property type="term" value="P:mRNA processing"/>
    <property type="evidence" value="ECO:0000314"/>
    <property type="project" value="UniProtKB"/>
</dbReference>
<dbReference type="GO" id="GO:1905869">
    <property type="term" value="P:negative regulation of 3'-UTR-mediated mRNA stabilization"/>
    <property type="evidence" value="ECO:0000314"/>
    <property type="project" value="UniProtKB"/>
</dbReference>
<dbReference type="GO" id="GO:0010608">
    <property type="term" value="P:post-transcriptional regulation of gene expression"/>
    <property type="evidence" value="ECO:0000314"/>
    <property type="project" value="UniProtKB"/>
</dbReference>
<dbReference type="GO" id="GO:0048024">
    <property type="term" value="P:regulation of mRNA splicing, via spliceosome"/>
    <property type="evidence" value="ECO:0000314"/>
    <property type="project" value="UniProtKB"/>
</dbReference>
<dbReference type="GO" id="GO:0070475">
    <property type="term" value="P:rRNA base methylation"/>
    <property type="evidence" value="ECO:0000318"/>
    <property type="project" value="GO_Central"/>
</dbReference>
<dbReference type="GO" id="GO:0006556">
    <property type="term" value="P:S-adenosylmethionine biosynthetic process"/>
    <property type="evidence" value="ECO:0000314"/>
    <property type="project" value="UniProtKB"/>
</dbReference>
<dbReference type="GO" id="GO:0120049">
    <property type="term" value="P:snRNA (adenine-N6)-methylation"/>
    <property type="evidence" value="ECO:0000314"/>
    <property type="project" value="UniProtKB"/>
</dbReference>
<dbReference type="CDD" id="cd02440">
    <property type="entry name" value="AdoMet_MTases"/>
    <property type="match status" value="1"/>
</dbReference>
<dbReference type="FunFam" id="3.40.50.150:FF:000062">
    <property type="entry name" value="U6 small nuclear RNA (adenine-(43)-N(6))-methyltransferase"/>
    <property type="match status" value="1"/>
</dbReference>
<dbReference type="Gene3D" id="3.40.50.150">
    <property type="entry name" value="Vaccinia Virus protein VP39"/>
    <property type="match status" value="1"/>
</dbReference>
<dbReference type="InterPro" id="IPR017182">
    <property type="entry name" value="METTL16/PsiM"/>
</dbReference>
<dbReference type="InterPro" id="IPR010286">
    <property type="entry name" value="METTL16/RlmF"/>
</dbReference>
<dbReference type="InterPro" id="IPR029063">
    <property type="entry name" value="SAM-dependent_MTases_sf"/>
</dbReference>
<dbReference type="PANTHER" id="PTHR13393:SF0">
    <property type="entry name" value="RNA N6-ADENOSINE-METHYLTRANSFERASE METTL16"/>
    <property type="match status" value="1"/>
</dbReference>
<dbReference type="PANTHER" id="PTHR13393">
    <property type="entry name" value="SAM-DEPENDENT METHYLTRANSFERASE"/>
    <property type="match status" value="1"/>
</dbReference>
<dbReference type="Pfam" id="PF05971">
    <property type="entry name" value="Methyltransf_10"/>
    <property type="match status" value="1"/>
</dbReference>
<dbReference type="PIRSF" id="PIRSF037350">
    <property type="entry name" value="Mtase_ZK1128_prd"/>
    <property type="match status" value="1"/>
</dbReference>
<dbReference type="SUPFAM" id="SSF53335">
    <property type="entry name" value="S-adenosyl-L-methionine-dependent methyltransferases"/>
    <property type="match status" value="1"/>
</dbReference>
<feature type="chain" id="PRO_0000310767" description="RNA N(6)-adenosine-methyltransferase METTL16">
    <location>
        <begin position="1"/>
        <end position="562"/>
    </location>
</feature>
<feature type="region of interest" description="RNA-binding" evidence="8 23 24">
    <location>
        <begin position="17"/>
        <end position="20"/>
    </location>
</feature>
<feature type="region of interest" description="K-loop" evidence="8">
    <location>
        <begin position="163"/>
        <end position="167"/>
    </location>
</feature>
<feature type="region of interest" description="RNA-binding" evidence="8 23 24">
    <location>
        <begin position="199"/>
        <end position="211"/>
    </location>
</feature>
<feature type="region of interest" description="RNA-binding" evidence="8 23 24">
    <location>
        <begin position="250"/>
        <end position="254"/>
    </location>
</feature>
<feature type="region of interest" description="RNA-binding" evidence="8 23 24">
    <location>
        <begin position="277"/>
        <end position="283"/>
    </location>
</feature>
<feature type="region of interest" description="VCR 1" evidence="5">
    <location>
        <begin position="289"/>
        <end position="400"/>
    </location>
</feature>
<feature type="region of interest" description="Disordered" evidence="2">
    <location>
        <begin position="402"/>
        <end position="498"/>
    </location>
</feature>
<feature type="region of interest" description="VCR 2" evidence="5">
    <location>
        <begin position="514"/>
        <end position="562"/>
    </location>
</feature>
<feature type="compositionally biased region" description="Basic and acidic residues" evidence="2">
    <location>
        <begin position="402"/>
        <end position="413"/>
    </location>
</feature>
<feature type="compositionally biased region" description="Acidic residues" evidence="2">
    <location>
        <begin position="458"/>
        <end position="467"/>
    </location>
</feature>
<feature type="compositionally biased region" description="Polar residues" evidence="2">
    <location>
        <begin position="480"/>
        <end position="496"/>
    </location>
</feature>
<feature type="binding site" evidence="7 9 14 20 22 25 26">
    <location>
        <position position="82"/>
    </location>
    <ligand>
        <name>S-adenosyl-L-methionine</name>
        <dbReference type="ChEBI" id="CHEBI:59789"/>
    </ligand>
</feature>
<feature type="binding site" evidence="9 14 20 25 26">
    <location>
        <position position="110"/>
    </location>
    <ligand>
        <name>S-adenosyl-L-methionine</name>
        <dbReference type="ChEBI" id="CHEBI:59789"/>
    </ligand>
</feature>
<feature type="binding site" evidence="9 26">
    <location>
        <position position="114"/>
    </location>
    <ligand>
        <name>S-adenosyl-L-methionine</name>
        <dbReference type="ChEBI" id="CHEBI:59789"/>
    </ligand>
</feature>
<feature type="binding site" evidence="7 9 14 20 22 25 26">
    <location>
        <position position="133"/>
    </location>
    <ligand>
        <name>S-adenosyl-L-methionine</name>
        <dbReference type="ChEBI" id="CHEBI:59789"/>
    </ligand>
</feature>
<feature type="binding site" evidence="7 9 14 20 22 25 26">
    <location>
        <position position="164"/>
    </location>
    <ligand>
        <name>S-adenosyl-L-methionine</name>
        <dbReference type="ChEBI" id="CHEBI:59789"/>
    </ligand>
</feature>
<feature type="binding site" evidence="9 14 20 25 26">
    <location>
        <position position="184"/>
    </location>
    <ligand>
        <name>S-adenosyl-L-methionine</name>
        <dbReference type="ChEBI" id="CHEBI:59789"/>
    </ligand>
</feature>
<feature type="modified residue" description="Phosphoserine" evidence="29 30 31">
    <location>
        <position position="329"/>
    </location>
</feature>
<feature type="modified residue" description="Phosphothreonine" evidence="1">
    <location>
        <position position="463"/>
    </location>
</feature>
<feature type="splice variant" id="VSP_029340" description="In isoform 2." evidence="15">
    <original>GITEIMAEGGE</original>
    <variation>DSLEPGRWRLQ</variation>
    <location>
        <begin position="214"/>
        <end position="224"/>
    </location>
</feature>
<feature type="splice variant" id="VSP_029341" description="In isoform 2." evidence="15">
    <location>
        <begin position="225"/>
        <end position="562"/>
    </location>
</feature>
<feature type="sequence variant" id="VAR_081134" description="Found in patients with large intestine cancer; abolished methyltransferase activity." evidence="8">
    <original>G</original>
    <variation>C</variation>
    <location>
        <position position="110"/>
    </location>
</feature>
<feature type="sequence variant" id="VAR_037086" description="In dbSNP:rs17834783." evidence="3">
    <original>S</original>
    <variation>N</variation>
    <location>
        <position position="479"/>
    </location>
</feature>
<feature type="mutagenesis site" description="Abolished methyltransferase activity." evidence="9">
    <original>KSMHARNRYKDK</original>
    <variation>ASMHAANAYADA</variation>
    <location>
        <begin position="5"/>
        <end position="16"/>
    </location>
</feature>
<feature type="mutagenesis site" description="Does not affect methyltransferase activity." evidence="9">
    <original>K</original>
    <variation>A</variation>
    <location>
        <position position="5"/>
    </location>
</feature>
<feature type="mutagenesis site" description="Reduced methyltransferase activity." evidence="9">
    <original>K</original>
    <variation>E</variation>
    <location>
        <position position="5"/>
    </location>
</feature>
<feature type="mutagenesis site" description="Does not affect methyltransferase activity." evidence="9">
    <original>R</original>
    <variation>A</variation>
    <location>
        <position position="10"/>
    </location>
</feature>
<feature type="mutagenesis site" description="Reduced methyltransferase activity." evidence="9">
    <original>R</original>
    <variation>D</variation>
    <variation>E</variation>
    <location>
        <position position="10"/>
    </location>
</feature>
<feature type="mutagenesis site" description="Does not affect methyltransferase activity." evidence="9">
    <original>R</original>
    <variation>A</variation>
    <location>
        <position position="12"/>
    </location>
</feature>
<feature type="mutagenesis site" description="Does not affect methyltransferase activity." evidence="9">
    <original>K</original>
    <variation>A</variation>
    <location>
        <position position="14"/>
    </location>
</feature>
<feature type="mutagenesis site" description="Does not affect methyltransferase activity." evidence="9">
    <original>K</original>
    <variation>A</variation>
    <location>
        <position position="16"/>
    </location>
</feature>
<feature type="mutagenesis site" description="Does not affect methyltransferase activity; when associated with A-31." evidence="9">
    <original>K</original>
    <variation>A</variation>
    <location>
        <position position="26"/>
    </location>
</feature>
<feature type="mutagenesis site" description="Does not affect methyltransferase activity; when associated with A-26." evidence="9">
    <original>K</original>
    <variation>A</variation>
    <location>
        <position position="31"/>
    </location>
</feature>
<feature type="mutagenesis site" description="Does not affect methyltransferase activity." evidence="8">
    <original>N</original>
    <variation>A</variation>
    <location>
        <position position="39"/>
    </location>
</feature>
<feature type="mutagenesis site" description="Reduced methyltransferase activity." evidence="9">
    <original>K</original>
    <variation>E</variation>
    <location>
        <position position="47"/>
    </location>
</feature>
<feature type="mutagenesis site" description="Abolished methyltransferase activity in vitro." evidence="8 9">
    <original>R</original>
    <variation>A</variation>
    <variation>E</variation>
    <location>
        <position position="82"/>
    </location>
</feature>
<feature type="mutagenesis site" description="Abolished methyltransferase activity in vitro." evidence="8">
    <original>E</original>
    <variation>A</variation>
    <location>
        <position position="133"/>
    </location>
</feature>
<feature type="mutagenesis site" description="Increased methyltransferase activity in vitro." evidence="8">
    <original>K</original>
    <variation>A</variation>
    <location>
        <position position="163"/>
    </location>
</feature>
<feature type="mutagenesis site" description="Increased methyltransferase activity in vitro." evidence="8">
    <original>M</original>
    <variation>A</variation>
    <location>
        <position position="167"/>
    </location>
</feature>
<feature type="mutagenesis site" description="Abolished methyltransferase activity in vitro." evidence="8">
    <original>N</original>
    <variation>A</variation>
    <location>
        <position position="184"/>
    </location>
</feature>
<feature type="mutagenesis site" description="Abolishes methyltransferase activity." evidence="5 9">
    <original>PP</original>
    <variation>AA</variation>
    <location>
        <begin position="185"/>
        <end position="186"/>
    </location>
</feature>
<feature type="mutagenesis site" description="Abolishes methyltransferase activity." evidence="5 9">
    <original>F</original>
    <variation>G</variation>
    <location>
        <position position="187"/>
    </location>
</feature>
<feature type="mutagenesis site" description="Abolished methyltransferase activity." evidence="9">
    <original>RNPRR</original>
    <variation>ENPEE</variation>
    <location>
        <begin position="200"/>
        <end position="204"/>
    </location>
</feature>
<feature type="mutagenesis site" description="Does not affect methyltransferase activity." evidence="9">
    <original>PRRPPP</original>
    <variation>ARRAAA</variation>
    <location>
        <begin position="202"/>
        <end position="207"/>
    </location>
</feature>
<feature type="mutagenesis site" description="Abolished methyltransferase activity." evidence="9">
    <original>R</original>
    <variation>E</variation>
    <location>
        <position position="279"/>
    </location>
</feature>
<feature type="mutagenesis site" description="Abolished methyltransferase activity." evidence="9">
    <original>R</original>
    <variation>E</variation>
    <location>
        <position position="282"/>
    </location>
</feature>
<feature type="sequence conflict" description="In Ref. 1; BAB55094." evidence="18" ref="1">
    <original>N</original>
    <variation>D</variation>
    <location>
        <position position="39"/>
    </location>
</feature>
<feature type="sequence conflict" description="In Ref. 2; CAD89999." evidence="18" ref="2">
    <original>G</original>
    <variation>A</variation>
    <location>
        <position position="214"/>
    </location>
</feature>
<feature type="sequence conflict" description="In Ref. 1; BAB55094." evidence="18" ref="1">
    <original>S</original>
    <variation>R</variation>
    <location>
        <position position="419"/>
    </location>
</feature>
<feature type="strand" evidence="33">
    <location>
        <begin position="5"/>
        <end position="7"/>
    </location>
</feature>
<feature type="turn" evidence="34">
    <location>
        <begin position="12"/>
        <end position="15"/>
    </location>
</feature>
<feature type="helix" evidence="34">
    <location>
        <begin position="20"/>
        <end position="26"/>
    </location>
</feature>
<feature type="helix" evidence="34">
    <location>
        <begin position="28"/>
        <end position="31"/>
    </location>
</feature>
<feature type="strand" evidence="36">
    <location>
        <begin position="34"/>
        <end position="36"/>
    </location>
</feature>
<feature type="strand" evidence="36">
    <location>
        <begin position="40"/>
        <end position="44"/>
    </location>
</feature>
<feature type="helix" evidence="34">
    <location>
        <begin position="49"/>
        <end position="64"/>
    </location>
</feature>
<feature type="helix" evidence="34">
    <location>
        <begin position="79"/>
        <end position="93"/>
    </location>
</feature>
<feature type="helix" evidence="33">
    <location>
        <begin position="95"/>
        <end position="97"/>
    </location>
</feature>
<feature type="helix" evidence="32">
    <location>
        <begin position="98"/>
        <end position="100"/>
    </location>
</feature>
<feature type="strand" evidence="34">
    <location>
        <begin position="105"/>
        <end position="110"/>
    </location>
</feature>
<feature type="turn" evidence="34">
    <location>
        <begin position="112"/>
        <end position="115"/>
    </location>
</feature>
<feature type="helix" evidence="34">
    <location>
        <begin position="116"/>
        <end position="125"/>
    </location>
</feature>
<feature type="strand" evidence="34">
    <location>
        <begin position="128"/>
        <end position="133"/>
    </location>
</feature>
<feature type="helix" evidence="34">
    <location>
        <begin position="136"/>
        <end position="148"/>
    </location>
</feature>
<feature type="turn" evidence="34">
    <location>
        <begin position="152"/>
        <end position="154"/>
    </location>
</feature>
<feature type="strand" evidence="34">
    <location>
        <begin position="155"/>
        <end position="159"/>
    </location>
</feature>
<feature type="strand" evidence="34">
    <location>
        <begin position="161"/>
        <end position="165"/>
    </location>
</feature>
<feature type="helix" evidence="33">
    <location>
        <begin position="166"/>
        <end position="169"/>
    </location>
</feature>
<feature type="strand" evidence="34">
    <location>
        <begin position="178"/>
        <end position="183"/>
    </location>
</feature>
<feature type="strand" evidence="34">
    <location>
        <begin position="188"/>
        <end position="190"/>
    </location>
</feature>
<feature type="helix" evidence="34">
    <location>
        <begin position="191"/>
        <end position="195"/>
    </location>
</feature>
<feature type="helix" evidence="34">
    <location>
        <begin position="215"/>
        <end position="218"/>
    </location>
</feature>
<feature type="helix" evidence="32">
    <location>
        <begin position="219"/>
        <end position="222"/>
    </location>
</feature>
<feature type="helix" evidence="34">
    <location>
        <begin position="223"/>
        <end position="238"/>
    </location>
</feature>
<feature type="helix" evidence="34">
    <location>
        <begin position="239"/>
        <end position="241"/>
    </location>
</feature>
<feature type="strand" evidence="34">
    <location>
        <begin position="242"/>
        <end position="250"/>
    </location>
</feature>
<feature type="helix" evidence="34">
    <location>
        <begin position="252"/>
        <end position="254"/>
    </location>
</feature>
<feature type="helix" evidence="34">
    <location>
        <begin position="255"/>
        <end position="264"/>
    </location>
</feature>
<feature type="strand" evidence="34">
    <location>
        <begin position="268"/>
        <end position="279"/>
    </location>
</feature>
<feature type="strand" evidence="34">
    <location>
        <begin position="281"/>
        <end position="288"/>
    </location>
</feature>
<feature type="strand" evidence="35">
    <location>
        <begin position="291"/>
        <end position="293"/>
    </location>
</feature>
<feature type="strand" evidence="37">
    <location>
        <begin position="312"/>
        <end position="316"/>
    </location>
</feature>
<feature type="helix" evidence="37">
    <location>
        <begin position="318"/>
        <end position="328"/>
    </location>
</feature>
<feature type="helix" evidence="37">
    <location>
        <begin position="338"/>
        <end position="352"/>
    </location>
</feature>
<feature type="strand" evidence="37">
    <location>
        <begin position="356"/>
        <end position="360"/>
    </location>
</feature>
<feature type="strand" evidence="37">
    <location>
        <begin position="366"/>
        <end position="375"/>
    </location>
</feature>
<feature type="strand" evidence="37">
    <location>
        <begin position="514"/>
        <end position="525"/>
    </location>
</feature>
<feature type="strand" evidence="37">
    <location>
        <begin position="528"/>
        <end position="537"/>
    </location>
</feature>
<feature type="helix" evidence="37">
    <location>
        <begin position="542"/>
        <end position="559"/>
    </location>
</feature>
<proteinExistence type="evidence at protein level"/>
<keyword id="KW-0002">3D-structure</keyword>
<keyword id="KW-0025">Alternative splicing</keyword>
<keyword id="KW-0963">Cytoplasm</keyword>
<keyword id="KW-0489">Methyltransferase</keyword>
<keyword id="KW-0539">Nucleus</keyword>
<keyword id="KW-0597">Phosphoprotein</keyword>
<keyword id="KW-1267">Proteomics identification</keyword>
<keyword id="KW-1185">Reference proteome</keyword>
<keyword id="KW-0694">RNA-binding</keyword>
<keyword id="KW-0949">S-adenosyl-L-methionine</keyword>
<keyword id="KW-0808">Transferase</keyword>
<sequence>MALSKSMHARNRYKDKPPDFAYLASKYPDFKQHVQINLNGRVSLNFKDPEAVRALTCTLLREDFGLSIDIPLERLIPTVPLRLNYIHWVEDLIGHQDSDKSTLRRGIDIGTGASCIYPLLGATLNGWYFLATEVDDMCFNYAKKNVEQNNLSDLIKVVKVPQKTLLMDALKEESEIIYDFCMCNPPFFANQLEAKGVNSRNPRRPPPSSVNTGGITEIMAEGGELEFVKRIIHDSLQLKKRLRWYSCMLGKKCSLAPLKEELRIQGVPKVTYTEFCQGRTMRWALAWSFYDDVTVPSPPSKRRKLEKPRKPITFVVLASVMKELSLKASPLRSETAEGIVVVTTWIEKILTDLKVQHKRVPCGKEEVSLFLTAIENSWIHLRRKKRERVRQLREVPRAPEDVIQALEEKKPTPKESGNSQELARGPQERTPCGPALREGEAAAVEGPCPSQESLSQEENPEPTEDERSEEKGGVEVLESCQGSSNGAQDQEASEQFGSPVAERGKRLPGVAGQYLFKCLINVKKEVDDALVEMHWVEGQNRDLMNQLCTYIRNQIFRLVAVN</sequence>
<protein>
    <recommendedName>
        <fullName evidence="18">RNA N(6)-adenosine-methyltransferase METTL16</fullName>
        <ecNumber evidence="5 8 9 12">2.1.1.348</ecNumber>
    </recommendedName>
    <alternativeName>
        <fullName evidence="17">Methyltransferase 10 domain-containing protein</fullName>
    </alternativeName>
    <alternativeName>
        <fullName evidence="16">Methyltransferase-like protein 16</fullName>
    </alternativeName>
    <alternativeName>
        <fullName evidence="18">U6 small nuclear RNA (adenine-(43)-N(6))-methyltransferase</fullName>
        <ecNumber evidence="5 6 11">2.1.1.346</ecNumber>
    </alternativeName>
</protein>
<name>MET16_HUMAN</name>
<comment type="function">
    <text evidence="4 5 6 8 9 11 12">RNA N6-methyltransferase that methylates adenosine residues at the N(6) position of a subset of RNAs and is involved in S-adenosyl-L-methionine homeostasis by regulating expression of MAT2A transcripts (PubMed:28525753, PubMed:30197297, PubMed:30197299, PubMed:33428944, PubMed:33930289). Able to N6-methylate a subset of mRNAs and U6 small nuclear RNAs (U6 snRNAs) (PubMed:28525753). In contrast to the METTL3-METTL14 heterodimer, only able to methylate a limited number of RNAs: requires both a 5'UACAGAGAA-3' nonamer sequence and a specific RNA structure (PubMed:28525753, PubMed:30197297, PubMed:30197299). Plays a key role in S-adenosyl-L-methionine homeostasis by mediating N6-methylation of MAT2A mRNAs, altering splicing of MAT2A transcripts: in presence of S-adenosyl-L-methionine, binds the 3'-UTR region of MAT2A mRNA and specifically N6-methylates the first hairpin of MAT2A mRNA, preventing recognition of their 3'-splice site by U2AF1/U2AF35, thereby inhibiting splicing and protein production of S-adenosylmethionine synthase (PubMed:28525753, PubMed:33930289). In S-adenosyl-L-methionine-limiting conditions, binds the 3'-UTR region of MAT2A mRNA but stalls due to the lack of a methyl donor, preventing N6-methylation and promoting expression of MAT2A (PubMed:28525753). In addition to mRNAs, also able to mediate N6-methylation of U6 small nuclear RNA (U6 snRNA): specifically N6-methylates adenine in position 43 of U6 snRNAs (PubMed:28525753, PubMed:29051200, PubMed:32266935). Also able to bind various lncRNAs, such as 7SK snRNA (7SK RNA) or 7SL RNA (PubMed:29051200). Specifically binds the 3'-end of the MALAT1 long non-coding RNA (PubMed:27872311).</text>
</comment>
<comment type="catalytic activity">
    <reaction evidence="5 6 11">
        <text>adenosine in U6 snRNA + S-adenosyl-L-methionine = N(6)-methyladenosine in U6 snRNA + S-adenosyl-L-homocysteine + H(+)</text>
        <dbReference type="Rhea" id="RHEA:52808"/>
        <dbReference type="Rhea" id="RHEA-COMP:13573"/>
        <dbReference type="Rhea" id="RHEA-COMP:13574"/>
        <dbReference type="ChEBI" id="CHEBI:15378"/>
        <dbReference type="ChEBI" id="CHEBI:57856"/>
        <dbReference type="ChEBI" id="CHEBI:59789"/>
        <dbReference type="ChEBI" id="CHEBI:74411"/>
        <dbReference type="ChEBI" id="CHEBI:74449"/>
        <dbReference type="EC" id="2.1.1.346"/>
    </reaction>
    <physiologicalReaction direction="left-to-right" evidence="5 6 11">
        <dbReference type="Rhea" id="RHEA:52809"/>
    </physiologicalReaction>
</comment>
<comment type="catalytic activity">
    <reaction evidence="5 8 9 12">
        <text>an adenosine in mRNA + S-adenosyl-L-methionine = an N(6)-methyladenosine in mRNA + S-adenosyl-L-homocysteine + H(+)</text>
        <dbReference type="Rhea" id="RHEA:55584"/>
        <dbReference type="Rhea" id="RHEA-COMP:12414"/>
        <dbReference type="Rhea" id="RHEA-COMP:12417"/>
        <dbReference type="ChEBI" id="CHEBI:15378"/>
        <dbReference type="ChEBI" id="CHEBI:57856"/>
        <dbReference type="ChEBI" id="CHEBI:59789"/>
        <dbReference type="ChEBI" id="CHEBI:74411"/>
        <dbReference type="ChEBI" id="CHEBI:74449"/>
        <dbReference type="EC" id="2.1.1.348"/>
    </reaction>
    <physiologicalReaction direction="left-to-right" evidence="5 8 9 12">
        <dbReference type="Rhea" id="RHEA:55585"/>
    </physiologicalReaction>
</comment>
<comment type="activity regulation">
    <text evidence="8 12">Methyltransferase activity is autoinhibited by the K-loop region that blocks S-adenosyl-L-methionine-binding (PubMed:30197297). Upon activation, K-loop changes conformation, allowing S-adenosyl-L-methionine-binding and subsequent methyltransferase activity (PubMed:30197297). mRNA N6-adenosine-methyltransferase activity is inhibited by zinc (PubMed:33428944).</text>
</comment>
<comment type="subunit">
    <text evidence="6">Interacts with MEPCE (PubMed:29051200). Interacts with LARP7 (PubMed:29051200).</text>
</comment>
<comment type="subcellular location">
    <subcellularLocation>
        <location evidence="4 10">Nucleus</location>
    </subcellularLocation>
    <subcellularLocation>
        <location evidence="10">Cytoplasm</location>
    </subcellularLocation>
</comment>
<comment type="alternative products">
    <event type="alternative splicing"/>
    <isoform>
        <id>Q86W50-1</id>
        <name>1</name>
        <sequence type="displayed"/>
    </isoform>
    <isoform>
        <id>Q86W50-2</id>
        <name>2</name>
        <sequence type="described" ref="VSP_029340 VSP_029341"/>
    </isoform>
</comment>
<comment type="domain">
    <text evidence="5 11">The VCR (vertebrate conserved) regions bind the first hairpin of MAT2A mRNAs (PubMed:28525753). The VCR regions interact with the internal stem-loop within U6 snRNAs, inducing the conformational rearrangement of the A43-containing region of U6 snRNA, thereby modifying the RNA structure to become suitable for productive catalysis by the methyltransferase region (PubMed:32266935).</text>
</comment>
<comment type="domain">
    <text evidence="8">The K-loop region occludes the S-adenosyl-L-methionine-binding pocket (PubMed:30197297). Upon activation, conformation of the K-loop changes, allowing S-adenosyl-L-methionine-binding (PubMed:30197297).</text>
</comment>
<comment type="similarity">
    <text evidence="18">Belongs to the methyltransferase superfamily. METTL16/RlmF family.</text>
</comment>
<comment type="caution">
    <text evidence="1 13">According to a report, N6-methylation of MAT2A affects MAT2A mRNA stability instead of preventing splicing (By similarity). However, it was later shown that N6-methylation of MAT2A transcripts prevents recognition of their 3'-splice site by U2AF1/U2AF35, thereby inhibiting splicing and protein production (PubMed:33930289).</text>
</comment>
<comment type="caution">
    <text evidence="7 8 9">Stoichiometry of the protein is unclear. According to two reports, the methyltransferase acts as a monomer (PubMed:30197297, PubMed:30197299). According to a another paper, it acts as a homodimer (PubMed:29593291).</text>
</comment>
<comment type="sequence caution" evidence="18">
    <conflict type="erroneous termination">
        <sequence resource="EMBL-CDS" id="BAB55094"/>
    </conflict>
    <text>Truncated C-terminus.</text>
</comment>
<comment type="sequence caution" evidence="18">
    <conflict type="frameshift">
        <sequence resource="EMBL-CDS" id="CAD89999"/>
    </conflict>
</comment>